<protein>
    <recommendedName>
        <fullName evidence="1">Shikimate dehydrogenase (NADP(+))</fullName>
        <shortName evidence="1">SDH</shortName>
        <ecNumber evidence="1">1.1.1.25</ecNumber>
    </recommendedName>
</protein>
<sequence length="262" mass="28646">MTKQFAVIGNPIEQSRSPELHHAFAEKTGVDLNYQKRLAPLDGFESSMRSFFAEGGSGMNVTVPFKEQAFALCDVLTERAQIAKAVNTLWMENGKLHGDNTDGQGLVAAIQALEWNLENTTILILGAGGATRGVIYPLVQAGAQKIVIANRTLARAEQLVDDLKTAVPQAQLQAISLNDLEGDFDIMINATSTSLSGDALQLPEKLQFKYAYEMAYGKPSSFIDQAKQRNVPYAEGFGMLVGQAIEAFYIWNGVRPQLKDFL</sequence>
<proteinExistence type="inferred from homology"/>
<reference key="1">
    <citation type="journal article" date="2008" name="J. Bacteriol.">
        <title>Comparative genome sequence analysis of multidrug-resistant Acinetobacter baumannii.</title>
        <authorList>
            <person name="Adams M.D."/>
            <person name="Goglin K."/>
            <person name="Molyneaux N."/>
            <person name="Hujer K.M."/>
            <person name="Lavender H."/>
            <person name="Jamison J.J."/>
            <person name="MacDonald I.J."/>
            <person name="Martin K.M."/>
            <person name="Russo T."/>
            <person name="Campagnari A.A."/>
            <person name="Hujer A.M."/>
            <person name="Bonomo R.A."/>
            <person name="Gill S.R."/>
        </authorList>
    </citation>
    <scope>NUCLEOTIDE SEQUENCE [LARGE SCALE GENOMIC DNA]</scope>
    <source>
        <strain>AB307-0294</strain>
    </source>
</reference>
<comment type="function">
    <text evidence="1">Involved in the biosynthesis of the chorismate, which leads to the biosynthesis of aromatic amino acids. Catalyzes the reversible NADPH linked reduction of 3-dehydroshikimate (DHSA) to yield shikimate (SA).</text>
</comment>
<comment type="catalytic activity">
    <reaction evidence="1">
        <text>shikimate + NADP(+) = 3-dehydroshikimate + NADPH + H(+)</text>
        <dbReference type="Rhea" id="RHEA:17737"/>
        <dbReference type="ChEBI" id="CHEBI:15378"/>
        <dbReference type="ChEBI" id="CHEBI:16630"/>
        <dbReference type="ChEBI" id="CHEBI:36208"/>
        <dbReference type="ChEBI" id="CHEBI:57783"/>
        <dbReference type="ChEBI" id="CHEBI:58349"/>
        <dbReference type="EC" id="1.1.1.25"/>
    </reaction>
</comment>
<comment type="pathway">
    <text evidence="1">Metabolic intermediate biosynthesis; chorismate biosynthesis; chorismate from D-erythrose 4-phosphate and phosphoenolpyruvate: step 4/7.</text>
</comment>
<comment type="subunit">
    <text evidence="1">Homodimer.</text>
</comment>
<comment type="similarity">
    <text evidence="1">Belongs to the shikimate dehydrogenase family.</text>
</comment>
<dbReference type="EC" id="1.1.1.25" evidence="1"/>
<dbReference type="EMBL" id="CP001172">
    <property type="protein sequence ID" value="ACJ59265.1"/>
    <property type="molecule type" value="Genomic_DNA"/>
</dbReference>
<dbReference type="RefSeq" id="WP_000166011.1">
    <property type="nucleotide sequence ID" value="NZ_CP001172.1"/>
</dbReference>
<dbReference type="SMR" id="B7GVX2"/>
<dbReference type="HOGENOM" id="CLU_044063_2_1_6"/>
<dbReference type="UniPathway" id="UPA00053">
    <property type="reaction ID" value="UER00087"/>
</dbReference>
<dbReference type="Proteomes" id="UP000006924">
    <property type="component" value="Chromosome"/>
</dbReference>
<dbReference type="GO" id="GO:0005829">
    <property type="term" value="C:cytosol"/>
    <property type="evidence" value="ECO:0007669"/>
    <property type="project" value="TreeGrafter"/>
</dbReference>
<dbReference type="GO" id="GO:0050661">
    <property type="term" value="F:NADP binding"/>
    <property type="evidence" value="ECO:0007669"/>
    <property type="project" value="InterPro"/>
</dbReference>
<dbReference type="GO" id="GO:0004764">
    <property type="term" value="F:shikimate 3-dehydrogenase (NADP+) activity"/>
    <property type="evidence" value="ECO:0007669"/>
    <property type="project" value="UniProtKB-UniRule"/>
</dbReference>
<dbReference type="GO" id="GO:0008652">
    <property type="term" value="P:amino acid biosynthetic process"/>
    <property type="evidence" value="ECO:0007669"/>
    <property type="project" value="UniProtKB-KW"/>
</dbReference>
<dbReference type="GO" id="GO:0009073">
    <property type="term" value="P:aromatic amino acid family biosynthetic process"/>
    <property type="evidence" value="ECO:0007669"/>
    <property type="project" value="UniProtKB-KW"/>
</dbReference>
<dbReference type="GO" id="GO:0009423">
    <property type="term" value="P:chorismate biosynthetic process"/>
    <property type="evidence" value="ECO:0007669"/>
    <property type="project" value="UniProtKB-UniRule"/>
</dbReference>
<dbReference type="GO" id="GO:0019632">
    <property type="term" value="P:shikimate metabolic process"/>
    <property type="evidence" value="ECO:0007669"/>
    <property type="project" value="InterPro"/>
</dbReference>
<dbReference type="CDD" id="cd01065">
    <property type="entry name" value="NAD_bind_Shikimate_DH"/>
    <property type="match status" value="1"/>
</dbReference>
<dbReference type="FunFam" id="3.40.50.10860:FF:000006">
    <property type="entry name" value="Shikimate dehydrogenase (NADP(+))"/>
    <property type="match status" value="1"/>
</dbReference>
<dbReference type="Gene3D" id="3.40.50.10860">
    <property type="entry name" value="Leucine Dehydrogenase, chain A, domain 1"/>
    <property type="match status" value="1"/>
</dbReference>
<dbReference type="Gene3D" id="3.40.50.720">
    <property type="entry name" value="NAD(P)-binding Rossmann-like Domain"/>
    <property type="match status" value="1"/>
</dbReference>
<dbReference type="HAMAP" id="MF_00222">
    <property type="entry name" value="Shikimate_DH_AroE"/>
    <property type="match status" value="1"/>
</dbReference>
<dbReference type="InterPro" id="IPR046346">
    <property type="entry name" value="Aminoacid_DH-like_N_sf"/>
</dbReference>
<dbReference type="InterPro" id="IPR036291">
    <property type="entry name" value="NAD(P)-bd_dom_sf"/>
</dbReference>
<dbReference type="InterPro" id="IPR041121">
    <property type="entry name" value="SDH_C"/>
</dbReference>
<dbReference type="InterPro" id="IPR011342">
    <property type="entry name" value="Shikimate_DH"/>
</dbReference>
<dbReference type="InterPro" id="IPR013708">
    <property type="entry name" value="Shikimate_DH-bd_N"/>
</dbReference>
<dbReference type="InterPro" id="IPR022893">
    <property type="entry name" value="Shikimate_DH_fam"/>
</dbReference>
<dbReference type="InterPro" id="IPR006151">
    <property type="entry name" value="Shikm_DH/Glu-tRNA_Rdtase"/>
</dbReference>
<dbReference type="NCBIfam" id="TIGR00507">
    <property type="entry name" value="aroE"/>
    <property type="match status" value="1"/>
</dbReference>
<dbReference type="NCBIfam" id="NF001310">
    <property type="entry name" value="PRK00258.1-2"/>
    <property type="match status" value="1"/>
</dbReference>
<dbReference type="PANTHER" id="PTHR21089:SF1">
    <property type="entry name" value="BIFUNCTIONAL 3-DEHYDROQUINATE DEHYDRATASE_SHIKIMATE DEHYDROGENASE, CHLOROPLASTIC"/>
    <property type="match status" value="1"/>
</dbReference>
<dbReference type="PANTHER" id="PTHR21089">
    <property type="entry name" value="SHIKIMATE DEHYDROGENASE"/>
    <property type="match status" value="1"/>
</dbReference>
<dbReference type="Pfam" id="PF18317">
    <property type="entry name" value="SDH_C"/>
    <property type="match status" value="1"/>
</dbReference>
<dbReference type="Pfam" id="PF01488">
    <property type="entry name" value="Shikimate_DH"/>
    <property type="match status" value="1"/>
</dbReference>
<dbReference type="Pfam" id="PF08501">
    <property type="entry name" value="Shikimate_dh_N"/>
    <property type="match status" value="1"/>
</dbReference>
<dbReference type="SUPFAM" id="SSF53223">
    <property type="entry name" value="Aminoacid dehydrogenase-like, N-terminal domain"/>
    <property type="match status" value="1"/>
</dbReference>
<dbReference type="SUPFAM" id="SSF51735">
    <property type="entry name" value="NAD(P)-binding Rossmann-fold domains"/>
    <property type="match status" value="1"/>
</dbReference>
<evidence type="ECO:0000255" key="1">
    <source>
        <dbReference type="HAMAP-Rule" id="MF_00222"/>
    </source>
</evidence>
<accession>B7GVX2</accession>
<feature type="chain" id="PRO_1000118866" description="Shikimate dehydrogenase (NADP(+))">
    <location>
        <begin position="1"/>
        <end position="262"/>
    </location>
</feature>
<feature type="active site" description="Proton acceptor" evidence="1">
    <location>
        <position position="66"/>
    </location>
</feature>
<feature type="binding site" evidence="1">
    <location>
        <begin position="15"/>
        <end position="17"/>
    </location>
    <ligand>
        <name>shikimate</name>
        <dbReference type="ChEBI" id="CHEBI:36208"/>
    </ligand>
</feature>
<feature type="binding site" evidence="1">
    <location>
        <position position="62"/>
    </location>
    <ligand>
        <name>shikimate</name>
        <dbReference type="ChEBI" id="CHEBI:36208"/>
    </ligand>
</feature>
<feature type="binding site" evidence="1">
    <location>
        <position position="78"/>
    </location>
    <ligand>
        <name>NADP(+)</name>
        <dbReference type="ChEBI" id="CHEBI:58349"/>
    </ligand>
</feature>
<feature type="binding site" evidence="1">
    <location>
        <position position="87"/>
    </location>
    <ligand>
        <name>shikimate</name>
        <dbReference type="ChEBI" id="CHEBI:36208"/>
    </ligand>
</feature>
<feature type="binding site" evidence="1">
    <location>
        <position position="102"/>
    </location>
    <ligand>
        <name>shikimate</name>
        <dbReference type="ChEBI" id="CHEBI:36208"/>
    </ligand>
</feature>
<feature type="binding site" evidence="1">
    <location>
        <begin position="126"/>
        <end position="130"/>
    </location>
    <ligand>
        <name>NADP(+)</name>
        <dbReference type="ChEBI" id="CHEBI:58349"/>
    </ligand>
</feature>
<feature type="binding site" evidence="1">
    <location>
        <begin position="150"/>
        <end position="155"/>
    </location>
    <ligand>
        <name>NADP(+)</name>
        <dbReference type="ChEBI" id="CHEBI:58349"/>
    </ligand>
</feature>
<feature type="binding site" evidence="1">
    <location>
        <position position="214"/>
    </location>
    <ligand>
        <name>NADP(+)</name>
        <dbReference type="ChEBI" id="CHEBI:58349"/>
    </ligand>
</feature>
<feature type="binding site" evidence="1">
    <location>
        <position position="216"/>
    </location>
    <ligand>
        <name>shikimate</name>
        <dbReference type="ChEBI" id="CHEBI:36208"/>
    </ligand>
</feature>
<feature type="binding site" evidence="1">
    <location>
        <position position="236"/>
    </location>
    <ligand>
        <name>NADP(+)</name>
        <dbReference type="ChEBI" id="CHEBI:58349"/>
    </ligand>
</feature>
<keyword id="KW-0028">Amino-acid biosynthesis</keyword>
<keyword id="KW-0057">Aromatic amino acid biosynthesis</keyword>
<keyword id="KW-0521">NADP</keyword>
<keyword id="KW-0560">Oxidoreductase</keyword>
<name>AROE_ACIB3</name>
<gene>
    <name evidence="1" type="primary">aroE</name>
    <name type="ordered locus">ABBFA_000402</name>
</gene>
<organism>
    <name type="scientific">Acinetobacter baumannii (strain AB307-0294)</name>
    <dbReference type="NCBI Taxonomy" id="557600"/>
    <lineage>
        <taxon>Bacteria</taxon>
        <taxon>Pseudomonadati</taxon>
        <taxon>Pseudomonadota</taxon>
        <taxon>Gammaproteobacteria</taxon>
        <taxon>Moraxellales</taxon>
        <taxon>Moraxellaceae</taxon>
        <taxon>Acinetobacter</taxon>
        <taxon>Acinetobacter calcoaceticus/baumannii complex</taxon>
    </lineage>
</organism>